<sequence>MVEPYSQQKQIQQVVYRILDANLDRAREGLRIIEEWCRFGLNSGQLAGECKYLRQEVAVWHTEELRAARDTAGDPGTDLSHPQEEQRSSIKALLQANFCRVEEALRVLEEYGKLYHPKMGQACKQMRYRVYSLETNLMGHQRHQLLRRSRLYLVTSPSESLLPTVEAALKGGLTLLQYRDKDTDDFVRLELATKLRQLCHSYGALFIINDRVDLALAVDADGVHLGQQDMPIATARQLLGPQRLIGRSTTNADEMQKAIAEGADYIGVGPVYETPTKIGKAAAGLGYVSYAAQHSSVPWFAIGGIDANNINDVIDAGAERVAVVRSLMQAEQPTLVTQYLISQLNRIKPES</sequence>
<protein>
    <recommendedName>
        <fullName evidence="1">Thiamine-phosphate synthase</fullName>
        <shortName evidence="1">TP synthase</shortName>
        <shortName evidence="1">TPS</shortName>
        <ecNumber evidence="1">2.5.1.3</ecNumber>
    </recommendedName>
    <alternativeName>
        <fullName evidence="1">Thiamine-phosphate pyrophosphorylase</fullName>
        <shortName evidence="1">TMP pyrophosphorylase</shortName>
        <shortName evidence="1">TMP-PPase</shortName>
    </alternativeName>
</protein>
<keyword id="KW-0460">Magnesium</keyword>
<keyword id="KW-0479">Metal-binding</keyword>
<keyword id="KW-1185">Reference proteome</keyword>
<keyword id="KW-0784">Thiamine biosynthesis</keyword>
<keyword id="KW-0808">Transferase</keyword>
<accession>Q8YX72</accession>
<comment type="function">
    <text evidence="1">Condenses 4-methyl-5-(beta-hydroxyethyl)thiazole monophosphate (THZ-P) and 2-methyl-4-amino-5-hydroxymethyl pyrimidine pyrophosphate (HMP-PP) to form thiamine monophosphate (TMP).</text>
</comment>
<comment type="catalytic activity">
    <reaction evidence="1">
        <text>2-[(2R,5Z)-2-carboxy-4-methylthiazol-5(2H)-ylidene]ethyl phosphate + 4-amino-2-methyl-5-(diphosphooxymethyl)pyrimidine + 2 H(+) = thiamine phosphate + CO2 + diphosphate</text>
        <dbReference type="Rhea" id="RHEA:47844"/>
        <dbReference type="ChEBI" id="CHEBI:15378"/>
        <dbReference type="ChEBI" id="CHEBI:16526"/>
        <dbReference type="ChEBI" id="CHEBI:33019"/>
        <dbReference type="ChEBI" id="CHEBI:37575"/>
        <dbReference type="ChEBI" id="CHEBI:57841"/>
        <dbReference type="ChEBI" id="CHEBI:62899"/>
        <dbReference type="EC" id="2.5.1.3"/>
    </reaction>
</comment>
<comment type="catalytic activity">
    <reaction evidence="1">
        <text>2-(2-carboxy-4-methylthiazol-5-yl)ethyl phosphate + 4-amino-2-methyl-5-(diphosphooxymethyl)pyrimidine + 2 H(+) = thiamine phosphate + CO2 + diphosphate</text>
        <dbReference type="Rhea" id="RHEA:47848"/>
        <dbReference type="ChEBI" id="CHEBI:15378"/>
        <dbReference type="ChEBI" id="CHEBI:16526"/>
        <dbReference type="ChEBI" id="CHEBI:33019"/>
        <dbReference type="ChEBI" id="CHEBI:37575"/>
        <dbReference type="ChEBI" id="CHEBI:57841"/>
        <dbReference type="ChEBI" id="CHEBI:62890"/>
        <dbReference type="EC" id="2.5.1.3"/>
    </reaction>
</comment>
<comment type="catalytic activity">
    <reaction evidence="1">
        <text>4-methyl-5-(2-phosphooxyethyl)-thiazole + 4-amino-2-methyl-5-(diphosphooxymethyl)pyrimidine + H(+) = thiamine phosphate + diphosphate</text>
        <dbReference type="Rhea" id="RHEA:22328"/>
        <dbReference type="ChEBI" id="CHEBI:15378"/>
        <dbReference type="ChEBI" id="CHEBI:33019"/>
        <dbReference type="ChEBI" id="CHEBI:37575"/>
        <dbReference type="ChEBI" id="CHEBI:57841"/>
        <dbReference type="ChEBI" id="CHEBI:58296"/>
        <dbReference type="EC" id="2.5.1.3"/>
    </reaction>
</comment>
<comment type="cofactor">
    <cofactor evidence="1">
        <name>Mg(2+)</name>
        <dbReference type="ChEBI" id="CHEBI:18420"/>
    </cofactor>
    <text evidence="1">Binds 1 Mg(2+) ion per subunit.</text>
</comment>
<comment type="pathway">
    <text evidence="1">Cofactor biosynthesis; thiamine diphosphate biosynthesis; thiamine phosphate from 4-amino-2-methyl-5-diphosphomethylpyrimidine and 4-methyl-5-(2-phosphoethyl)-thiazole: step 1/1.</text>
</comment>
<comment type="similarity">
    <text evidence="1">Belongs to the thiamine-phosphate synthase family.</text>
</comment>
<comment type="sequence caution" evidence="2">
    <conflict type="erroneous initiation">
        <sequence resource="EMBL-CDS" id="BAB73300"/>
    </conflict>
</comment>
<name>THIE_NOSS1</name>
<feature type="chain" id="PRO_0000157078" description="Thiamine-phosphate synthase">
    <location>
        <begin position="1"/>
        <end position="351"/>
    </location>
</feature>
<feature type="region of interest" description="Unknown">
    <location>
        <begin position="1"/>
        <end position="129"/>
    </location>
</feature>
<feature type="region of interest" description="Thiamine-phosphate synthase">
    <location>
        <begin position="130"/>
        <end position="351"/>
    </location>
</feature>
<feature type="binding site" evidence="1">
    <location>
        <begin position="177"/>
        <end position="181"/>
    </location>
    <ligand>
        <name>4-amino-2-methyl-5-(diphosphooxymethyl)pyrimidine</name>
        <dbReference type="ChEBI" id="CHEBI:57841"/>
    </ligand>
</feature>
<feature type="binding site" evidence="1">
    <location>
        <position position="209"/>
    </location>
    <ligand>
        <name>4-amino-2-methyl-5-(diphosphooxymethyl)pyrimidine</name>
        <dbReference type="ChEBI" id="CHEBI:57841"/>
    </ligand>
</feature>
<feature type="binding site" evidence="1">
    <location>
        <position position="210"/>
    </location>
    <ligand>
        <name>Mg(2+)</name>
        <dbReference type="ChEBI" id="CHEBI:18420"/>
    </ligand>
</feature>
<feature type="binding site" evidence="1">
    <location>
        <position position="229"/>
    </location>
    <ligand>
        <name>Mg(2+)</name>
        <dbReference type="ChEBI" id="CHEBI:18420"/>
    </ligand>
</feature>
<feature type="binding site" evidence="1">
    <location>
        <position position="248"/>
    </location>
    <ligand>
        <name>4-amino-2-methyl-5-(diphosphooxymethyl)pyrimidine</name>
        <dbReference type="ChEBI" id="CHEBI:57841"/>
    </ligand>
</feature>
<feature type="binding site" evidence="1">
    <location>
        <begin position="274"/>
        <end position="276"/>
    </location>
    <ligand>
        <name>2-[(2R,5Z)-2-carboxy-4-methylthiazol-5(2H)-ylidene]ethyl phosphate</name>
        <dbReference type="ChEBI" id="CHEBI:62899"/>
    </ligand>
</feature>
<feature type="binding site" evidence="1">
    <location>
        <position position="277"/>
    </location>
    <ligand>
        <name>4-amino-2-methyl-5-(diphosphooxymethyl)pyrimidine</name>
        <dbReference type="ChEBI" id="CHEBI:57841"/>
    </ligand>
</feature>
<feature type="binding site" evidence="1">
    <location>
        <position position="304"/>
    </location>
    <ligand>
        <name>2-[(2R,5Z)-2-carboxy-4-methylthiazol-5(2H)-ylidene]ethyl phosphate</name>
        <dbReference type="ChEBI" id="CHEBI:62899"/>
    </ligand>
</feature>
<gene>
    <name evidence="1" type="primary">thiE</name>
    <name type="ordered locus">alr1343</name>
</gene>
<reference key="1">
    <citation type="journal article" date="2001" name="DNA Res.">
        <title>Complete genomic sequence of the filamentous nitrogen-fixing cyanobacterium Anabaena sp. strain PCC 7120.</title>
        <authorList>
            <person name="Kaneko T."/>
            <person name="Nakamura Y."/>
            <person name="Wolk C.P."/>
            <person name="Kuritz T."/>
            <person name="Sasamoto S."/>
            <person name="Watanabe A."/>
            <person name="Iriguchi M."/>
            <person name="Ishikawa A."/>
            <person name="Kawashima K."/>
            <person name="Kimura T."/>
            <person name="Kishida Y."/>
            <person name="Kohara M."/>
            <person name="Matsumoto M."/>
            <person name="Matsuno A."/>
            <person name="Muraki A."/>
            <person name="Nakazaki N."/>
            <person name="Shimpo S."/>
            <person name="Sugimoto M."/>
            <person name="Takazawa M."/>
            <person name="Yamada M."/>
            <person name="Yasuda M."/>
            <person name="Tabata S."/>
        </authorList>
    </citation>
    <scope>NUCLEOTIDE SEQUENCE [LARGE SCALE GENOMIC DNA]</scope>
    <source>
        <strain>PCC 7120 / SAG 25.82 / UTEX 2576</strain>
    </source>
</reference>
<dbReference type="EC" id="2.5.1.3" evidence="1"/>
<dbReference type="EMBL" id="BA000019">
    <property type="protein sequence ID" value="BAB73300.1"/>
    <property type="status" value="ALT_INIT"/>
    <property type="molecule type" value="Genomic_DNA"/>
</dbReference>
<dbReference type="PIR" id="AD1974">
    <property type="entry name" value="AD1974"/>
</dbReference>
<dbReference type="SMR" id="Q8YX72"/>
<dbReference type="STRING" id="103690.gene:10493358"/>
<dbReference type="KEGG" id="ana:alr1343"/>
<dbReference type="eggNOG" id="COG0352">
    <property type="taxonomic scope" value="Bacteria"/>
</dbReference>
<dbReference type="UniPathway" id="UPA00060">
    <property type="reaction ID" value="UER00141"/>
</dbReference>
<dbReference type="Proteomes" id="UP000002483">
    <property type="component" value="Chromosome"/>
</dbReference>
<dbReference type="GO" id="GO:0005737">
    <property type="term" value="C:cytoplasm"/>
    <property type="evidence" value="ECO:0007669"/>
    <property type="project" value="TreeGrafter"/>
</dbReference>
<dbReference type="GO" id="GO:0000287">
    <property type="term" value="F:magnesium ion binding"/>
    <property type="evidence" value="ECO:0007669"/>
    <property type="project" value="UniProtKB-UniRule"/>
</dbReference>
<dbReference type="GO" id="GO:0004789">
    <property type="term" value="F:thiamine-phosphate diphosphorylase activity"/>
    <property type="evidence" value="ECO:0007669"/>
    <property type="project" value="UniProtKB-UniRule"/>
</dbReference>
<dbReference type="GO" id="GO:0009228">
    <property type="term" value="P:thiamine biosynthetic process"/>
    <property type="evidence" value="ECO:0007669"/>
    <property type="project" value="UniProtKB-KW"/>
</dbReference>
<dbReference type="GO" id="GO:0009229">
    <property type="term" value="P:thiamine diphosphate biosynthetic process"/>
    <property type="evidence" value="ECO:0007669"/>
    <property type="project" value="UniProtKB-UniRule"/>
</dbReference>
<dbReference type="CDD" id="cd00564">
    <property type="entry name" value="TMP_TenI"/>
    <property type="match status" value="1"/>
</dbReference>
<dbReference type="FunFam" id="3.20.20.70:FF:000096">
    <property type="entry name" value="Thiamine-phosphate synthase"/>
    <property type="match status" value="1"/>
</dbReference>
<dbReference type="Gene3D" id="3.20.20.70">
    <property type="entry name" value="Aldolase class I"/>
    <property type="match status" value="1"/>
</dbReference>
<dbReference type="HAMAP" id="MF_00097">
    <property type="entry name" value="TMP_synthase"/>
    <property type="match status" value="1"/>
</dbReference>
<dbReference type="HAMAP" id="MF_01327">
    <property type="entry name" value="TMP_synthase_cyanobact"/>
    <property type="match status" value="1"/>
</dbReference>
<dbReference type="InterPro" id="IPR013785">
    <property type="entry name" value="Aldolase_TIM"/>
</dbReference>
<dbReference type="InterPro" id="IPR036206">
    <property type="entry name" value="ThiamineP_synth_sf"/>
</dbReference>
<dbReference type="InterPro" id="IPR022998">
    <property type="entry name" value="ThiamineP_synth_TenI"/>
</dbReference>
<dbReference type="InterPro" id="IPR041397">
    <property type="entry name" value="ThiD2"/>
</dbReference>
<dbReference type="InterPro" id="IPR034291">
    <property type="entry name" value="TMP_synthase"/>
</dbReference>
<dbReference type="InterPro" id="IPR016229">
    <property type="entry name" value="TMP_synthase_cyanobac_bac"/>
</dbReference>
<dbReference type="NCBIfam" id="NF002727">
    <property type="entry name" value="PRK02615.1"/>
    <property type="match status" value="1"/>
</dbReference>
<dbReference type="NCBIfam" id="TIGR00693">
    <property type="entry name" value="thiE"/>
    <property type="match status" value="1"/>
</dbReference>
<dbReference type="PANTHER" id="PTHR20857">
    <property type="entry name" value="THIAMINE-PHOSPHATE PYROPHOSPHORYLASE"/>
    <property type="match status" value="1"/>
</dbReference>
<dbReference type="PANTHER" id="PTHR20857:SF15">
    <property type="entry name" value="THIAMINE-PHOSPHATE SYNTHASE"/>
    <property type="match status" value="1"/>
</dbReference>
<dbReference type="Pfam" id="PF17792">
    <property type="entry name" value="ThiD2"/>
    <property type="match status" value="1"/>
</dbReference>
<dbReference type="Pfam" id="PF02581">
    <property type="entry name" value="TMP-TENI"/>
    <property type="match status" value="1"/>
</dbReference>
<dbReference type="PIRSF" id="PIRSF000512">
    <property type="entry name" value="TMP_PPase_Cyanobac_prd"/>
    <property type="match status" value="1"/>
</dbReference>
<dbReference type="SUPFAM" id="SSF51391">
    <property type="entry name" value="Thiamin phosphate synthase"/>
    <property type="match status" value="1"/>
</dbReference>
<organism>
    <name type="scientific">Nostoc sp. (strain PCC 7120 / SAG 25.82 / UTEX 2576)</name>
    <dbReference type="NCBI Taxonomy" id="103690"/>
    <lineage>
        <taxon>Bacteria</taxon>
        <taxon>Bacillati</taxon>
        <taxon>Cyanobacteriota</taxon>
        <taxon>Cyanophyceae</taxon>
        <taxon>Nostocales</taxon>
        <taxon>Nostocaceae</taxon>
        <taxon>Nostoc</taxon>
    </lineage>
</organism>
<evidence type="ECO:0000255" key="1">
    <source>
        <dbReference type="HAMAP-Rule" id="MF_01327"/>
    </source>
</evidence>
<evidence type="ECO:0000305" key="2"/>
<proteinExistence type="inferred from homology"/>